<evidence type="ECO:0000255" key="1">
    <source>
        <dbReference type="HAMAP-Rule" id="MF_01008"/>
    </source>
</evidence>
<evidence type="ECO:0000255" key="2">
    <source>
        <dbReference type="PROSITE-ProRule" id="PRU01076"/>
    </source>
</evidence>
<sequence length="143" mass="16608">MFMGEYQHNIDIKGRLIVPAKFRELLGDNFVITRGLDKCLFAYPQEEWKKLEEKLQTLPLTKKDARSFTRFFFSGASECELDKQGRINIPSNLLQYADLEKETVIIGVSSRIEIWSKSEWDDVFNEAEESFADLAENMIGFDI</sequence>
<accession>C1KWZ5</accession>
<name>MRAZ_LISMC</name>
<reference key="1">
    <citation type="journal article" date="2012" name="BMC Genomics">
        <title>Comparative genomics and transcriptomics of lineages I, II, and III strains of Listeria monocytogenes.</title>
        <authorList>
            <person name="Hain T."/>
            <person name="Ghai R."/>
            <person name="Billion A."/>
            <person name="Kuenne C.T."/>
            <person name="Steinweg C."/>
            <person name="Izar B."/>
            <person name="Mohamed W."/>
            <person name="Mraheil M."/>
            <person name="Domann E."/>
            <person name="Schaffrath S."/>
            <person name="Karst U."/>
            <person name="Goesmann A."/>
            <person name="Oehm S."/>
            <person name="Puhler A."/>
            <person name="Merkl R."/>
            <person name="Vorwerk S."/>
            <person name="Glaser P."/>
            <person name="Garrido P."/>
            <person name="Rusniok C."/>
            <person name="Buchrieser C."/>
            <person name="Goebel W."/>
            <person name="Chakraborty T."/>
        </authorList>
    </citation>
    <scope>NUCLEOTIDE SEQUENCE [LARGE SCALE GENOMIC DNA]</scope>
    <source>
        <strain>CLIP80459</strain>
    </source>
</reference>
<proteinExistence type="inferred from homology"/>
<gene>
    <name evidence="1" type="primary">mraZ</name>
    <name type="ordered locus">Lm4b_02063</name>
</gene>
<organism>
    <name type="scientific">Listeria monocytogenes serotype 4b (strain CLIP80459)</name>
    <dbReference type="NCBI Taxonomy" id="568819"/>
    <lineage>
        <taxon>Bacteria</taxon>
        <taxon>Bacillati</taxon>
        <taxon>Bacillota</taxon>
        <taxon>Bacilli</taxon>
        <taxon>Bacillales</taxon>
        <taxon>Listeriaceae</taxon>
        <taxon>Listeria</taxon>
    </lineage>
</organism>
<feature type="chain" id="PRO_1000213178" description="Transcriptional regulator MraZ">
    <location>
        <begin position="1"/>
        <end position="143"/>
    </location>
</feature>
<feature type="domain" description="SpoVT-AbrB 1" evidence="2">
    <location>
        <begin position="5"/>
        <end position="47"/>
    </location>
</feature>
<feature type="domain" description="SpoVT-AbrB 2" evidence="2">
    <location>
        <begin position="76"/>
        <end position="119"/>
    </location>
</feature>
<keyword id="KW-0963">Cytoplasm</keyword>
<keyword id="KW-0238">DNA-binding</keyword>
<keyword id="KW-0677">Repeat</keyword>
<keyword id="KW-0804">Transcription</keyword>
<keyword id="KW-0805">Transcription regulation</keyword>
<protein>
    <recommendedName>
        <fullName>Transcriptional regulator MraZ</fullName>
    </recommendedName>
</protein>
<comment type="subunit">
    <text evidence="1">Forms oligomers.</text>
</comment>
<comment type="subcellular location">
    <subcellularLocation>
        <location evidence="1">Cytoplasm</location>
        <location evidence="1">Nucleoid</location>
    </subcellularLocation>
</comment>
<comment type="similarity">
    <text evidence="1">Belongs to the MraZ family.</text>
</comment>
<dbReference type="EMBL" id="FM242711">
    <property type="protein sequence ID" value="CAS05822.1"/>
    <property type="molecule type" value="Genomic_DNA"/>
</dbReference>
<dbReference type="RefSeq" id="WP_003723756.1">
    <property type="nucleotide sequence ID" value="NC_012488.1"/>
</dbReference>
<dbReference type="SMR" id="C1KWZ5"/>
<dbReference type="GeneID" id="93239939"/>
<dbReference type="KEGG" id="lmc:Lm4b_02063"/>
<dbReference type="HOGENOM" id="CLU_107907_0_5_9"/>
<dbReference type="GO" id="GO:0005737">
    <property type="term" value="C:cytoplasm"/>
    <property type="evidence" value="ECO:0007669"/>
    <property type="project" value="UniProtKB-UniRule"/>
</dbReference>
<dbReference type="GO" id="GO:0009295">
    <property type="term" value="C:nucleoid"/>
    <property type="evidence" value="ECO:0007669"/>
    <property type="project" value="UniProtKB-SubCell"/>
</dbReference>
<dbReference type="GO" id="GO:0003700">
    <property type="term" value="F:DNA-binding transcription factor activity"/>
    <property type="evidence" value="ECO:0007669"/>
    <property type="project" value="UniProtKB-UniRule"/>
</dbReference>
<dbReference type="GO" id="GO:0000976">
    <property type="term" value="F:transcription cis-regulatory region binding"/>
    <property type="evidence" value="ECO:0007669"/>
    <property type="project" value="TreeGrafter"/>
</dbReference>
<dbReference type="GO" id="GO:2000143">
    <property type="term" value="P:negative regulation of DNA-templated transcription initiation"/>
    <property type="evidence" value="ECO:0007669"/>
    <property type="project" value="TreeGrafter"/>
</dbReference>
<dbReference type="CDD" id="cd16321">
    <property type="entry name" value="MraZ_C"/>
    <property type="match status" value="1"/>
</dbReference>
<dbReference type="CDD" id="cd16320">
    <property type="entry name" value="MraZ_N"/>
    <property type="match status" value="1"/>
</dbReference>
<dbReference type="FunFam" id="3.40.1550.20:FF:000002">
    <property type="entry name" value="Transcriptional regulator MraZ"/>
    <property type="match status" value="1"/>
</dbReference>
<dbReference type="Gene3D" id="3.40.1550.20">
    <property type="entry name" value="Transcriptional regulator MraZ domain"/>
    <property type="match status" value="1"/>
</dbReference>
<dbReference type="HAMAP" id="MF_01008">
    <property type="entry name" value="MraZ"/>
    <property type="match status" value="1"/>
</dbReference>
<dbReference type="InterPro" id="IPR003444">
    <property type="entry name" value="MraZ"/>
</dbReference>
<dbReference type="InterPro" id="IPR035644">
    <property type="entry name" value="MraZ_C"/>
</dbReference>
<dbReference type="InterPro" id="IPR020603">
    <property type="entry name" value="MraZ_dom"/>
</dbReference>
<dbReference type="InterPro" id="IPR035642">
    <property type="entry name" value="MraZ_N"/>
</dbReference>
<dbReference type="InterPro" id="IPR038619">
    <property type="entry name" value="MraZ_sf"/>
</dbReference>
<dbReference type="InterPro" id="IPR007159">
    <property type="entry name" value="SpoVT-AbrB_dom"/>
</dbReference>
<dbReference type="InterPro" id="IPR037914">
    <property type="entry name" value="SpoVT-AbrB_sf"/>
</dbReference>
<dbReference type="NCBIfam" id="TIGR00242">
    <property type="entry name" value="division/cell wall cluster transcriptional repressor MraZ"/>
    <property type="match status" value="1"/>
</dbReference>
<dbReference type="PANTHER" id="PTHR34701">
    <property type="entry name" value="TRANSCRIPTIONAL REGULATOR MRAZ"/>
    <property type="match status" value="1"/>
</dbReference>
<dbReference type="PANTHER" id="PTHR34701:SF1">
    <property type="entry name" value="TRANSCRIPTIONAL REGULATOR MRAZ"/>
    <property type="match status" value="1"/>
</dbReference>
<dbReference type="Pfam" id="PF02381">
    <property type="entry name" value="MraZ"/>
    <property type="match status" value="2"/>
</dbReference>
<dbReference type="SUPFAM" id="SSF89447">
    <property type="entry name" value="AbrB/MazE/MraZ-like"/>
    <property type="match status" value="1"/>
</dbReference>
<dbReference type="PROSITE" id="PS51740">
    <property type="entry name" value="SPOVT_ABRB"/>
    <property type="match status" value="2"/>
</dbReference>